<dbReference type="EMBL" id="BC133427">
    <property type="protein sequence ID" value="AAI33428.1"/>
    <property type="molecule type" value="mRNA"/>
</dbReference>
<dbReference type="RefSeq" id="NP_001075000.1">
    <property type="nucleotide sequence ID" value="NM_001081531.2"/>
</dbReference>
<dbReference type="RefSeq" id="XP_005210953.1">
    <property type="nucleotide sequence ID" value="XM_005210896.3"/>
</dbReference>
<dbReference type="RefSeq" id="XP_005210955.1">
    <property type="nucleotide sequence ID" value="XM_005210898.3"/>
</dbReference>
<dbReference type="RefSeq" id="XP_005210956.1">
    <property type="nucleotide sequence ID" value="XM_005210899.3"/>
</dbReference>
<dbReference type="RefSeq" id="XP_010806832.1">
    <property type="nucleotide sequence ID" value="XM_010808530.2"/>
</dbReference>
<dbReference type="SMR" id="A2VDV9"/>
<dbReference type="FunCoup" id="A2VDV9">
    <property type="interactions" value="1918"/>
</dbReference>
<dbReference type="STRING" id="9913.ENSBTAP00000028866"/>
<dbReference type="PaxDb" id="9913-ENSBTAP00000028866"/>
<dbReference type="Ensembl" id="ENSBTAT00000028866.5">
    <property type="protein sequence ID" value="ENSBTAP00000028866.4"/>
    <property type="gene ID" value="ENSBTAG00000021663.6"/>
</dbReference>
<dbReference type="GeneID" id="533179"/>
<dbReference type="KEGG" id="bta:533179"/>
<dbReference type="CTD" id="57150"/>
<dbReference type="VEuPathDB" id="HostDB:ENSBTAG00000021663"/>
<dbReference type="VGNC" id="VGNC:50075">
    <property type="gene designation" value="SMIM8"/>
</dbReference>
<dbReference type="eggNOG" id="ENOG502S4X3">
    <property type="taxonomic scope" value="Eukaryota"/>
</dbReference>
<dbReference type="GeneTree" id="ENSGT00390000011674"/>
<dbReference type="HOGENOM" id="CLU_170028_0_0_1"/>
<dbReference type="InParanoid" id="A2VDV9"/>
<dbReference type="OMA" id="YMHATRE"/>
<dbReference type="OrthoDB" id="1880105at2759"/>
<dbReference type="TreeFam" id="TF323863"/>
<dbReference type="Proteomes" id="UP000009136">
    <property type="component" value="Chromosome 9"/>
</dbReference>
<dbReference type="Bgee" id="ENSBTAG00000021663">
    <property type="expression patterns" value="Expressed in oocyte and 106 other cell types or tissues"/>
</dbReference>
<dbReference type="GO" id="GO:0016020">
    <property type="term" value="C:membrane"/>
    <property type="evidence" value="ECO:0007669"/>
    <property type="project" value="UniProtKB-SubCell"/>
</dbReference>
<dbReference type="InterPro" id="IPR026686">
    <property type="entry name" value="UPF0708"/>
</dbReference>
<dbReference type="PANTHER" id="PTHR14274">
    <property type="entry name" value="SMALL INTEGRAL MEMBRANE PROTEIN 8"/>
    <property type="match status" value="1"/>
</dbReference>
<dbReference type="PANTHER" id="PTHR14274:SF1">
    <property type="entry name" value="SMALL INTEGRAL MEMBRANE PROTEIN 8"/>
    <property type="match status" value="1"/>
</dbReference>
<dbReference type="Pfam" id="PF14937">
    <property type="entry name" value="DUF4500"/>
    <property type="match status" value="1"/>
</dbReference>
<reference key="1">
    <citation type="submission" date="2007-02" db="EMBL/GenBank/DDBJ databases">
        <authorList>
            <consortium name="NIH - Mammalian Gene Collection (MGC) project"/>
        </authorList>
    </citation>
    <scope>NUCLEOTIDE SEQUENCE [LARGE SCALE MRNA]</scope>
    <source>
        <strain>Crossbred X Angus</strain>
        <tissue>Liver</tissue>
    </source>
</reference>
<name>SMIM8_BOVIN</name>
<protein>
    <recommendedName>
        <fullName>Small integral membrane protein 8</fullName>
    </recommendedName>
</protein>
<keyword id="KW-0472">Membrane</keyword>
<keyword id="KW-1185">Reference proteome</keyword>
<keyword id="KW-0812">Transmembrane</keyword>
<keyword id="KW-1133">Transmembrane helix</keyword>
<feature type="chain" id="PRO_0000360399" description="Small integral membrane protein 8">
    <location>
        <begin position="1"/>
        <end position="97"/>
    </location>
</feature>
<feature type="transmembrane region" description="Helical" evidence="1">
    <location>
        <begin position="48"/>
        <end position="70"/>
    </location>
</feature>
<feature type="region of interest" description="Disordered" evidence="2">
    <location>
        <begin position="1"/>
        <end position="22"/>
    </location>
</feature>
<feature type="compositionally biased region" description="Basic and acidic residues" evidence="2">
    <location>
        <begin position="9"/>
        <end position="20"/>
    </location>
</feature>
<comment type="subcellular location">
    <subcellularLocation>
        <location evidence="3">Membrane</location>
        <topology evidence="3">Single-pass membrane protein</topology>
    </subcellularLocation>
</comment>
<comment type="similarity">
    <text evidence="3">Belongs to the SMIM8 family.</text>
</comment>
<evidence type="ECO:0000255" key="1"/>
<evidence type="ECO:0000256" key="2">
    <source>
        <dbReference type="SAM" id="MobiDB-lite"/>
    </source>
</evidence>
<evidence type="ECO:0000305" key="3"/>
<accession>A2VDV9</accession>
<proteinExistence type="inferred from homology"/>
<organism>
    <name type="scientific">Bos taurus</name>
    <name type="common">Bovine</name>
    <dbReference type="NCBI Taxonomy" id="9913"/>
    <lineage>
        <taxon>Eukaryota</taxon>
        <taxon>Metazoa</taxon>
        <taxon>Chordata</taxon>
        <taxon>Craniata</taxon>
        <taxon>Vertebrata</taxon>
        <taxon>Euteleostomi</taxon>
        <taxon>Mammalia</taxon>
        <taxon>Eutheria</taxon>
        <taxon>Laurasiatheria</taxon>
        <taxon>Artiodactyla</taxon>
        <taxon>Ruminantia</taxon>
        <taxon>Pecora</taxon>
        <taxon>Bovidae</taxon>
        <taxon>Bovinae</taxon>
        <taxon>Bos</taxon>
    </lineage>
</organism>
<sequence length="97" mass="10955">MSSAPEPPAFKKEPPKEKDLGNIGLRGVRTTTLFRAVNPELFIKPNKPVMAFGLITISLCVAYIGYLHATQENKKDLYEAIDSEGHSYMRRKTSKWD</sequence>
<gene>
    <name type="primary">SMIM8</name>
</gene>